<organism>
    <name type="scientific">Protochlamydia amoebophila (strain UWE25)</name>
    <dbReference type="NCBI Taxonomy" id="264201"/>
    <lineage>
        <taxon>Bacteria</taxon>
        <taxon>Pseudomonadati</taxon>
        <taxon>Chlamydiota</taxon>
        <taxon>Chlamydiia</taxon>
        <taxon>Parachlamydiales</taxon>
        <taxon>Parachlamydiaceae</taxon>
        <taxon>Candidatus Protochlamydia</taxon>
    </lineage>
</organism>
<sequence length="454" mass="50350">MRGHYHFIGIGGIGMSGLARILLQQNLSVSGSDIAFNYTIEGLIKSGATIYKGHSPSYITSGSTVIYSSDIKTDNPEYLAAKNLQCSLLHRAELLALLTRQKKSLAVTGTHGKTTTSSLLATTLLEANCDSSFAVGGIIPQFQSNAKHGLGDLFVFEADESDRSFLKYFPYGAIVTNIDNDHLNSYENSEDVLIQSFQQFTSQISSPNHLFWCGDDTHLKFLNGIGQSYGFGEHCNWRISNVFQKDFNLEFDLEGNEKKYPSIKLNLIGRHNLLNGAAVFGLAMSLNISEASIRHTFERFCGVLRRCEYKGEFENTIFLDDYAHHPTEIQTTLEGIRKAIKSKRLIAVFQPHRFSRIKDCLGMYGKIFNNADEVFVTDVYGAGETPIEGISQQQIIQEISENSSVPVKYVPRTALGHKLSEFIQPLDVIVTLGAGDVTKVASETLSLLENGKRF</sequence>
<dbReference type="EC" id="6.3.2.8" evidence="1"/>
<dbReference type="EMBL" id="BX908798">
    <property type="protein sequence ID" value="CAF23971.1"/>
    <property type="molecule type" value="Genomic_DNA"/>
</dbReference>
<dbReference type="RefSeq" id="WP_011175797.1">
    <property type="nucleotide sequence ID" value="NC_005861.2"/>
</dbReference>
<dbReference type="SMR" id="Q6MBS8"/>
<dbReference type="STRING" id="264201.pc1247"/>
<dbReference type="KEGG" id="pcu:PC_RS06010"/>
<dbReference type="eggNOG" id="COG0773">
    <property type="taxonomic scope" value="Bacteria"/>
</dbReference>
<dbReference type="HOGENOM" id="CLU_028104_2_2_0"/>
<dbReference type="OrthoDB" id="9804126at2"/>
<dbReference type="UniPathway" id="UPA00219"/>
<dbReference type="Proteomes" id="UP000000529">
    <property type="component" value="Chromosome"/>
</dbReference>
<dbReference type="GO" id="GO:0005737">
    <property type="term" value="C:cytoplasm"/>
    <property type="evidence" value="ECO:0007669"/>
    <property type="project" value="UniProtKB-SubCell"/>
</dbReference>
<dbReference type="GO" id="GO:0005524">
    <property type="term" value="F:ATP binding"/>
    <property type="evidence" value="ECO:0007669"/>
    <property type="project" value="UniProtKB-UniRule"/>
</dbReference>
<dbReference type="GO" id="GO:0008763">
    <property type="term" value="F:UDP-N-acetylmuramate-L-alanine ligase activity"/>
    <property type="evidence" value="ECO:0007669"/>
    <property type="project" value="UniProtKB-UniRule"/>
</dbReference>
<dbReference type="GO" id="GO:0051301">
    <property type="term" value="P:cell division"/>
    <property type="evidence" value="ECO:0007669"/>
    <property type="project" value="UniProtKB-KW"/>
</dbReference>
<dbReference type="GO" id="GO:0071555">
    <property type="term" value="P:cell wall organization"/>
    <property type="evidence" value="ECO:0007669"/>
    <property type="project" value="UniProtKB-KW"/>
</dbReference>
<dbReference type="GO" id="GO:0009252">
    <property type="term" value="P:peptidoglycan biosynthetic process"/>
    <property type="evidence" value="ECO:0007669"/>
    <property type="project" value="UniProtKB-UniRule"/>
</dbReference>
<dbReference type="GO" id="GO:0008360">
    <property type="term" value="P:regulation of cell shape"/>
    <property type="evidence" value="ECO:0007669"/>
    <property type="project" value="UniProtKB-KW"/>
</dbReference>
<dbReference type="Gene3D" id="3.90.190.20">
    <property type="entry name" value="Mur ligase, C-terminal domain"/>
    <property type="match status" value="1"/>
</dbReference>
<dbReference type="Gene3D" id="3.40.1190.10">
    <property type="entry name" value="Mur-like, catalytic domain"/>
    <property type="match status" value="1"/>
</dbReference>
<dbReference type="Gene3D" id="3.40.50.720">
    <property type="entry name" value="NAD(P)-binding Rossmann-like Domain"/>
    <property type="match status" value="1"/>
</dbReference>
<dbReference type="HAMAP" id="MF_00046">
    <property type="entry name" value="MurC"/>
    <property type="match status" value="1"/>
</dbReference>
<dbReference type="InterPro" id="IPR036565">
    <property type="entry name" value="Mur-like_cat_sf"/>
</dbReference>
<dbReference type="InterPro" id="IPR004101">
    <property type="entry name" value="Mur_ligase_C"/>
</dbReference>
<dbReference type="InterPro" id="IPR036615">
    <property type="entry name" value="Mur_ligase_C_dom_sf"/>
</dbReference>
<dbReference type="InterPro" id="IPR013221">
    <property type="entry name" value="Mur_ligase_cen"/>
</dbReference>
<dbReference type="InterPro" id="IPR000713">
    <property type="entry name" value="Mur_ligase_N"/>
</dbReference>
<dbReference type="InterPro" id="IPR050061">
    <property type="entry name" value="MurCDEF_pg_biosynth"/>
</dbReference>
<dbReference type="InterPro" id="IPR005758">
    <property type="entry name" value="UDP-N-AcMur_Ala_ligase_MurC"/>
</dbReference>
<dbReference type="NCBIfam" id="TIGR01082">
    <property type="entry name" value="murC"/>
    <property type="match status" value="1"/>
</dbReference>
<dbReference type="PANTHER" id="PTHR43445:SF3">
    <property type="entry name" value="UDP-N-ACETYLMURAMATE--L-ALANINE LIGASE"/>
    <property type="match status" value="1"/>
</dbReference>
<dbReference type="PANTHER" id="PTHR43445">
    <property type="entry name" value="UDP-N-ACETYLMURAMATE--L-ALANINE LIGASE-RELATED"/>
    <property type="match status" value="1"/>
</dbReference>
<dbReference type="Pfam" id="PF01225">
    <property type="entry name" value="Mur_ligase"/>
    <property type="match status" value="1"/>
</dbReference>
<dbReference type="Pfam" id="PF02875">
    <property type="entry name" value="Mur_ligase_C"/>
    <property type="match status" value="1"/>
</dbReference>
<dbReference type="Pfam" id="PF08245">
    <property type="entry name" value="Mur_ligase_M"/>
    <property type="match status" value="1"/>
</dbReference>
<dbReference type="SUPFAM" id="SSF51984">
    <property type="entry name" value="MurCD N-terminal domain"/>
    <property type="match status" value="1"/>
</dbReference>
<dbReference type="SUPFAM" id="SSF53623">
    <property type="entry name" value="MurD-like peptide ligases, catalytic domain"/>
    <property type="match status" value="1"/>
</dbReference>
<dbReference type="SUPFAM" id="SSF53244">
    <property type="entry name" value="MurD-like peptide ligases, peptide-binding domain"/>
    <property type="match status" value="1"/>
</dbReference>
<comment type="function">
    <text evidence="1">Cell wall formation.</text>
</comment>
<comment type="catalytic activity">
    <reaction evidence="1">
        <text>UDP-N-acetyl-alpha-D-muramate + L-alanine + ATP = UDP-N-acetyl-alpha-D-muramoyl-L-alanine + ADP + phosphate + H(+)</text>
        <dbReference type="Rhea" id="RHEA:23372"/>
        <dbReference type="ChEBI" id="CHEBI:15378"/>
        <dbReference type="ChEBI" id="CHEBI:30616"/>
        <dbReference type="ChEBI" id="CHEBI:43474"/>
        <dbReference type="ChEBI" id="CHEBI:57972"/>
        <dbReference type="ChEBI" id="CHEBI:70757"/>
        <dbReference type="ChEBI" id="CHEBI:83898"/>
        <dbReference type="ChEBI" id="CHEBI:456216"/>
        <dbReference type="EC" id="6.3.2.8"/>
    </reaction>
</comment>
<comment type="pathway">
    <text evidence="1">Cell wall biogenesis; peptidoglycan biosynthesis.</text>
</comment>
<comment type="subcellular location">
    <subcellularLocation>
        <location evidence="1">Cytoplasm</location>
    </subcellularLocation>
</comment>
<comment type="similarity">
    <text evidence="1">Belongs to the MurCDEF family.</text>
</comment>
<accession>Q6MBS8</accession>
<evidence type="ECO:0000255" key="1">
    <source>
        <dbReference type="HAMAP-Rule" id="MF_00046"/>
    </source>
</evidence>
<feature type="chain" id="PRO_0000182126" description="UDP-N-acetylmuramate--L-alanine ligase">
    <location>
        <begin position="1"/>
        <end position="454"/>
    </location>
</feature>
<feature type="binding site" evidence="1">
    <location>
        <begin position="109"/>
        <end position="115"/>
    </location>
    <ligand>
        <name>ATP</name>
        <dbReference type="ChEBI" id="CHEBI:30616"/>
    </ligand>
</feature>
<reference key="1">
    <citation type="journal article" date="2004" name="Science">
        <title>Illuminating the evolutionary history of chlamydiae.</title>
        <authorList>
            <person name="Horn M."/>
            <person name="Collingro A."/>
            <person name="Schmitz-Esser S."/>
            <person name="Beier C.L."/>
            <person name="Purkhold U."/>
            <person name="Fartmann B."/>
            <person name="Brandt P."/>
            <person name="Nyakatura G.J."/>
            <person name="Droege M."/>
            <person name="Frishman D."/>
            <person name="Rattei T."/>
            <person name="Mewes H.-W."/>
            <person name="Wagner M."/>
        </authorList>
    </citation>
    <scope>NUCLEOTIDE SEQUENCE [LARGE SCALE GENOMIC DNA]</scope>
    <source>
        <strain>UWE25</strain>
    </source>
</reference>
<protein>
    <recommendedName>
        <fullName evidence="1">UDP-N-acetylmuramate--L-alanine ligase</fullName>
        <ecNumber evidence="1">6.3.2.8</ecNumber>
    </recommendedName>
    <alternativeName>
        <fullName evidence="1">UDP-N-acetylmuramoyl-L-alanine synthetase</fullName>
    </alternativeName>
</protein>
<gene>
    <name evidence="1" type="primary">murC</name>
    <name type="ordered locus">pc1247</name>
</gene>
<keyword id="KW-0067">ATP-binding</keyword>
<keyword id="KW-0131">Cell cycle</keyword>
<keyword id="KW-0132">Cell division</keyword>
<keyword id="KW-0133">Cell shape</keyword>
<keyword id="KW-0961">Cell wall biogenesis/degradation</keyword>
<keyword id="KW-0963">Cytoplasm</keyword>
<keyword id="KW-0436">Ligase</keyword>
<keyword id="KW-0547">Nucleotide-binding</keyword>
<keyword id="KW-0573">Peptidoglycan synthesis</keyword>
<keyword id="KW-1185">Reference proteome</keyword>
<proteinExistence type="inferred from homology"/>
<name>MURC_PARUW</name>